<dbReference type="EC" id="2.7.1.33" evidence="1"/>
<dbReference type="EMBL" id="BA000043">
    <property type="protein sequence ID" value="BAD74348.1"/>
    <property type="molecule type" value="Genomic_DNA"/>
</dbReference>
<dbReference type="RefSeq" id="WP_011229578.1">
    <property type="nucleotide sequence ID" value="NC_006510.1"/>
</dbReference>
<dbReference type="SMR" id="Q5L3T0"/>
<dbReference type="STRING" id="235909.GK0063"/>
<dbReference type="KEGG" id="gka:GK0063"/>
<dbReference type="eggNOG" id="COG1521">
    <property type="taxonomic scope" value="Bacteria"/>
</dbReference>
<dbReference type="HOGENOM" id="CLU_066627_1_0_9"/>
<dbReference type="UniPathway" id="UPA00241">
    <property type="reaction ID" value="UER00352"/>
</dbReference>
<dbReference type="Proteomes" id="UP000001172">
    <property type="component" value="Chromosome"/>
</dbReference>
<dbReference type="GO" id="GO:0005737">
    <property type="term" value="C:cytoplasm"/>
    <property type="evidence" value="ECO:0007669"/>
    <property type="project" value="UniProtKB-SubCell"/>
</dbReference>
<dbReference type="GO" id="GO:0005524">
    <property type="term" value="F:ATP binding"/>
    <property type="evidence" value="ECO:0007669"/>
    <property type="project" value="UniProtKB-UniRule"/>
</dbReference>
<dbReference type="GO" id="GO:0046872">
    <property type="term" value="F:metal ion binding"/>
    <property type="evidence" value="ECO:0007669"/>
    <property type="project" value="UniProtKB-KW"/>
</dbReference>
<dbReference type="GO" id="GO:0004594">
    <property type="term" value="F:pantothenate kinase activity"/>
    <property type="evidence" value="ECO:0007669"/>
    <property type="project" value="UniProtKB-UniRule"/>
</dbReference>
<dbReference type="GO" id="GO:0015937">
    <property type="term" value="P:coenzyme A biosynthetic process"/>
    <property type="evidence" value="ECO:0007669"/>
    <property type="project" value="UniProtKB-UniRule"/>
</dbReference>
<dbReference type="CDD" id="cd24015">
    <property type="entry name" value="ASKHA_NBD_PanK-III"/>
    <property type="match status" value="1"/>
</dbReference>
<dbReference type="Gene3D" id="3.30.420.40">
    <property type="match status" value="2"/>
</dbReference>
<dbReference type="HAMAP" id="MF_01274">
    <property type="entry name" value="Pantothen_kinase_3"/>
    <property type="match status" value="1"/>
</dbReference>
<dbReference type="InterPro" id="IPR043129">
    <property type="entry name" value="ATPase_NBD"/>
</dbReference>
<dbReference type="InterPro" id="IPR004619">
    <property type="entry name" value="Type_III_PanK"/>
</dbReference>
<dbReference type="NCBIfam" id="TIGR00671">
    <property type="entry name" value="baf"/>
    <property type="match status" value="1"/>
</dbReference>
<dbReference type="NCBIfam" id="NF009843">
    <property type="entry name" value="PRK13318.1-1"/>
    <property type="match status" value="1"/>
</dbReference>
<dbReference type="NCBIfam" id="NF009847">
    <property type="entry name" value="PRK13318.1-5"/>
    <property type="match status" value="1"/>
</dbReference>
<dbReference type="NCBIfam" id="NF009848">
    <property type="entry name" value="PRK13318.1-6"/>
    <property type="match status" value="1"/>
</dbReference>
<dbReference type="NCBIfam" id="NF009855">
    <property type="entry name" value="PRK13321.1"/>
    <property type="match status" value="1"/>
</dbReference>
<dbReference type="PANTHER" id="PTHR34265">
    <property type="entry name" value="TYPE III PANTOTHENATE KINASE"/>
    <property type="match status" value="1"/>
</dbReference>
<dbReference type="PANTHER" id="PTHR34265:SF1">
    <property type="entry name" value="TYPE III PANTOTHENATE KINASE"/>
    <property type="match status" value="1"/>
</dbReference>
<dbReference type="Pfam" id="PF03309">
    <property type="entry name" value="Pan_kinase"/>
    <property type="match status" value="1"/>
</dbReference>
<dbReference type="SUPFAM" id="SSF53067">
    <property type="entry name" value="Actin-like ATPase domain"/>
    <property type="match status" value="2"/>
</dbReference>
<feature type="chain" id="PRO_0000267539" description="Type III pantothenate kinase">
    <location>
        <begin position="1"/>
        <end position="258"/>
    </location>
</feature>
<feature type="active site" description="Proton acceptor" evidence="1">
    <location>
        <position position="109"/>
    </location>
</feature>
<feature type="binding site" evidence="1">
    <location>
        <begin position="6"/>
        <end position="13"/>
    </location>
    <ligand>
        <name>ATP</name>
        <dbReference type="ChEBI" id="CHEBI:30616"/>
    </ligand>
</feature>
<feature type="binding site" evidence="1">
    <location>
        <position position="100"/>
    </location>
    <ligand>
        <name>substrate</name>
    </ligand>
</feature>
<feature type="binding site" evidence="1">
    <location>
        <begin position="107"/>
        <end position="110"/>
    </location>
    <ligand>
        <name>substrate</name>
    </ligand>
</feature>
<feature type="binding site" evidence="1">
    <location>
        <position position="129"/>
    </location>
    <ligand>
        <name>K(+)</name>
        <dbReference type="ChEBI" id="CHEBI:29103"/>
    </ligand>
</feature>
<feature type="binding site" evidence="1">
    <location>
        <position position="132"/>
    </location>
    <ligand>
        <name>ATP</name>
        <dbReference type="ChEBI" id="CHEBI:30616"/>
    </ligand>
</feature>
<feature type="binding site" evidence="1">
    <location>
        <position position="184"/>
    </location>
    <ligand>
        <name>substrate</name>
    </ligand>
</feature>
<comment type="function">
    <text evidence="1">Catalyzes the phosphorylation of pantothenate (Pan), the first step in CoA biosynthesis.</text>
</comment>
<comment type="catalytic activity">
    <reaction evidence="1">
        <text>(R)-pantothenate + ATP = (R)-4'-phosphopantothenate + ADP + H(+)</text>
        <dbReference type="Rhea" id="RHEA:16373"/>
        <dbReference type="ChEBI" id="CHEBI:10986"/>
        <dbReference type="ChEBI" id="CHEBI:15378"/>
        <dbReference type="ChEBI" id="CHEBI:29032"/>
        <dbReference type="ChEBI" id="CHEBI:30616"/>
        <dbReference type="ChEBI" id="CHEBI:456216"/>
        <dbReference type="EC" id="2.7.1.33"/>
    </reaction>
</comment>
<comment type="cofactor">
    <cofactor evidence="1">
        <name>NH4(+)</name>
        <dbReference type="ChEBI" id="CHEBI:28938"/>
    </cofactor>
    <cofactor evidence="1">
        <name>K(+)</name>
        <dbReference type="ChEBI" id="CHEBI:29103"/>
    </cofactor>
    <text evidence="1">A monovalent cation. Ammonium or potassium.</text>
</comment>
<comment type="pathway">
    <text evidence="1">Cofactor biosynthesis; coenzyme A biosynthesis; CoA from (R)-pantothenate: step 1/5.</text>
</comment>
<comment type="subunit">
    <text evidence="1">Homodimer.</text>
</comment>
<comment type="subcellular location">
    <subcellularLocation>
        <location evidence="1">Cytoplasm</location>
    </subcellularLocation>
</comment>
<comment type="similarity">
    <text evidence="1">Belongs to the type III pantothenate kinase family.</text>
</comment>
<accession>Q5L3T0</accession>
<sequence length="258" mass="28204">MIFVLDVGNTNTVLGVYDGDELKHHWRIETSRSKTEDEYGMMIKALLNHVGLQFSDIRGIIISSVVPPIMFALERMCLKYFHIKPLIVGPGIKTGLDIKYDNPREVGADRIVNAVAGIHLYGSPLIIVDFGTATTYCYINEHKQYMGGAIAPGIMISTEALFARAAKLPRIEIARPDDIIGKNTVSAMQAGILYGYVGQVEGIVSRMKAKSKIPPKVIATGGLAPLIASESDIIDVVDPFLTLTGLKLLYEKNTEKKG</sequence>
<organism>
    <name type="scientific">Geobacillus kaustophilus (strain HTA426)</name>
    <dbReference type="NCBI Taxonomy" id="235909"/>
    <lineage>
        <taxon>Bacteria</taxon>
        <taxon>Bacillati</taxon>
        <taxon>Bacillota</taxon>
        <taxon>Bacilli</taxon>
        <taxon>Bacillales</taxon>
        <taxon>Anoxybacillaceae</taxon>
        <taxon>Geobacillus</taxon>
        <taxon>Geobacillus thermoleovorans group</taxon>
    </lineage>
</organism>
<keyword id="KW-0067">ATP-binding</keyword>
<keyword id="KW-0173">Coenzyme A biosynthesis</keyword>
<keyword id="KW-0963">Cytoplasm</keyword>
<keyword id="KW-0418">Kinase</keyword>
<keyword id="KW-0479">Metal-binding</keyword>
<keyword id="KW-0547">Nucleotide-binding</keyword>
<keyword id="KW-0630">Potassium</keyword>
<keyword id="KW-1185">Reference proteome</keyword>
<keyword id="KW-0808">Transferase</keyword>
<gene>
    <name evidence="1" type="primary">coaX</name>
    <name type="ordered locus">GK0063</name>
</gene>
<proteinExistence type="inferred from homology"/>
<reference key="1">
    <citation type="journal article" date="2004" name="Nucleic Acids Res.">
        <title>Thermoadaptation trait revealed by the genome sequence of thermophilic Geobacillus kaustophilus.</title>
        <authorList>
            <person name="Takami H."/>
            <person name="Takaki Y."/>
            <person name="Chee G.-J."/>
            <person name="Nishi S."/>
            <person name="Shimamura S."/>
            <person name="Suzuki H."/>
            <person name="Matsui S."/>
            <person name="Uchiyama I."/>
        </authorList>
    </citation>
    <scope>NUCLEOTIDE SEQUENCE [LARGE SCALE GENOMIC DNA]</scope>
    <source>
        <strain>HTA426</strain>
    </source>
</reference>
<protein>
    <recommendedName>
        <fullName evidence="1">Type III pantothenate kinase</fullName>
        <ecNumber evidence="1">2.7.1.33</ecNumber>
    </recommendedName>
    <alternativeName>
        <fullName evidence="1">PanK-III</fullName>
    </alternativeName>
    <alternativeName>
        <fullName evidence="1">Pantothenic acid kinase</fullName>
    </alternativeName>
</protein>
<evidence type="ECO:0000255" key="1">
    <source>
        <dbReference type="HAMAP-Rule" id="MF_01274"/>
    </source>
</evidence>
<name>COAX_GEOKA</name>